<feature type="chain" id="PRO_1000088265" description="Membrane protein insertase YidC">
    <location>
        <begin position="1"/>
        <end position="545"/>
    </location>
</feature>
<feature type="transmembrane region" description="Helical" evidence="1">
    <location>
        <begin position="6"/>
        <end position="26"/>
    </location>
</feature>
<feature type="transmembrane region" description="Helical" evidence="1">
    <location>
        <begin position="346"/>
        <end position="366"/>
    </location>
</feature>
<feature type="transmembrane region" description="Helical" evidence="1">
    <location>
        <begin position="424"/>
        <end position="444"/>
    </location>
</feature>
<feature type="transmembrane region" description="Helical" evidence="1">
    <location>
        <begin position="461"/>
        <end position="481"/>
    </location>
</feature>
<feature type="transmembrane region" description="Helical" evidence="1">
    <location>
        <begin position="504"/>
        <end position="524"/>
    </location>
</feature>
<feature type="region of interest" description="Disordered" evidence="2">
    <location>
        <begin position="44"/>
        <end position="65"/>
    </location>
</feature>
<proteinExistence type="inferred from homology"/>
<protein>
    <recommendedName>
        <fullName evidence="1">Membrane protein insertase YidC</fullName>
    </recommendedName>
    <alternativeName>
        <fullName evidence="1">Foldase YidC</fullName>
    </alternativeName>
    <alternativeName>
        <fullName evidence="1">Membrane integrase YidC</fullName>
    </alternativeName>
    <alternativeName>
        <fullName evidence="1">Membrane protein YidC</fullName>
    </alternativeName>
</protein>
<sequence>MESQRNILLIGLLFVSFLLWQQWQADKAPQPVAAAQTQSSIPASTVADAHSSDVPDADSAVPEATPASKELITVITDQLEIKIDPVGGDIVYSALLSHKLEEKGDDPFVLLEQTNDIYYIAQSGLIGRDGIDSSVKGRAHFDSASREYKLADGQETLNVPLTYVSDKGVAYTKVFVFTRGKYNIAVDYKINNTSDAQLQVQMYGQIKHSIKKSESSMMMPTYRGGAFSTADTRYEKYSFDDMADKNLDKSTLGGWVAMLQHYFVSAWVPPANDKNIIFSSVSAGGLANIGFRGALYDIAPGTEQSIKAEFYVGPKDQEALSALSPSLNLVVDYGFLWWLAVPIYKLLMFFQSIVGNWGIAIILITLTVRGMLYPLTKAQYTSMAKMRNLQPKLAELKERFGDDRQKMGQAMMELYKKEKVNPMGGCLPILLQMPIFIALYWVLLESVELRHAPFMLWITDLSVQDPYYVMPILMGISMFVMQKMQPMAPTMDPMQVKMMQWMPVIFTVFFLWFPAGLVLYWLVGNLVAITQQKIIYAGLEKKGLK</sequence>
<dbReference type="EMBL" id="CP000851">
    <property type="protein sequence ID" value="ABV89567.1"/>
    <property type="molecule type" value="Genomic_DNA"/>
</dbReference>
<dbReference type="RefSeq" id="WP_012157444.1">
    <property type="nucleotide sequence ID" value="NC_009901.1"/>
</dbReference>
<dbReference type="SMR" id="A8HAI0"/>
<dbReference type="STRING" id="398579.Spea_4257"/>
<dbReference type="KEGG" id="spl:Spea_4257"/>
<dbReference type="eggNOG" id="COG0706">
    <property type="taxonomic scope" value="Bacteria"/>
</dbReference>
<dbReference type="HOGENOM" id="CLU_016535_3_0_6"/>
<dbReference type="OrthoDB" id="9780552at2"/>
<dbReference type="Proteomes" id="UP000002608">
    <property type="component" value="Chromosome"/>
</dbReference>
<dbReference type="GO" id="GO:0005886">
    <property type="term" value="C:plasma membrane"/>
    <property type="evidence" value="ECO:0007669"/>
    <property type="project" value="UniProtKB-SubCell"/>
</dbReference>
<dbReference type="GO" id="GO:0032977">
    <property type="term" value="F:membrane insertase activity"/>
    <property type="evidence" value="ECO:0007669"/>
    <property type="project" value="InterPro"/>
</dbReference>
<dbReference type="GO" id="GO:0051205">
    <property type="term" value="P:protein insertion into membrane"/>
    <property type="evidence" value="ECO:0007669"/>
    <property type="project" value="TreeGrafter"/>
</dbReference>
<dbReference type="GO" id="GO:0015031">
    <property type="term" value="P:protein transport"/>
    <property type="evidence" value="ECO:0007669"/>
    <property type="project" value="UniProtKB-KW"/>
</dbReference>
<dbReference type="CDD" id="cd20070">
    <property type="entry name" value="5TM_YidC_Alb3"/>
    <property type="match status" value="1"/>
</dbReference>
<dbReference type="CDD" id="cd19961">
    <property type="entry name" value="EcYidC-like_peri"/>
    <property type="match status" value="1"/>
</dbReference>
<dbReference type="Gene3D" id="2.70.98.90">
    <property type="match status" value="1"/>
</dbReference>
<dbReference type="HAMAP" id="MF_01810">
    <property type="entry name" value="YidC_type1"/>
    <property type="match status" value="1"/>
</dbReference>
<dbReference type="InterPro" id="IPR019998">
    <property type="entry name" value="Membr_insert_YidC"/>
</dbReference>
<dbReference type="InterPro" id="IPR028053">
    <property type="entry name" value="Membr_insert_YidC_N"/>
</dbReference>
<dbReference type="InterPro" id="IPR001708">
    <property type="entry name" value="YidC/ALB3/OXA1/COX18"/>
</dbReference>
<dbReference type="InterPro" id="IPR028055">
    <property type="entry name" value="YidC/Oxa/ALB_C"/>
</dbReference>
<dbReference type="InterPro" id="IPR047196">
    <property type="entry name" value="YidC_ALB_C"/>
</dbReference>
<dbReference type="InterPro" id="IPR038221">
    <property type="entry name" value="YidC_periplasmic_sf"/>
</dbReference>
<dbReference type="NCBIfam" id="NF002351">
    <property type="entry name" value="PRK01318.1-1"/>
    <property type="match status" value="1"/>
</dbReference>
<dbReference type="NCBIfam" id="NF002352">
    <property type="entry name" value="PRK01318.1-3"/>
    <property type="match status" value="1"/>
</dbReference>
<dbReference type="NCBIfam" id="TIGR03593">
    <property type="entry name" value="yidC_nterm"/>
    <property type="match status" value="1"/>
</dbReference>
<dbReference type="NCBIfam" id="TIGR03592">
    <property type="entry name" value="yidC_oxa1_cterm"/>
    <property type="match status" value="1"/>
</dbReference>
<dbReference type="PANTHER" id="PTHR12428:SF65">
    <property type="entry name" value="CYTOCHROME C OXIDASE ASSEMBLY PROTEIN COX18, MITOCHONDRIAL"/>
    <property type="match status" value="1"/>
</dbReference>
<dbReference type="PANTHER" id="PTHR12428">
    <property type="entry name" value="OXA1"/>
    <property type="match status" value="1"/>
</dbReference>
<dbReference type="Pfam" id="PF02096">
    <property type="entry name" value="60KD_IMP"/>
    <property type="match status" value="1"/>
</dbReference>
<dbReference type="Pfam" id="PF14849">
    <property type="entry name" value="YidC_periplas"/>
    <property type="match status" value="1"/>
</dbReference>
<dbReference type="PRINTS" id="PR00701">
    <property type="entry name" value="60KDINNERMP"/>
</dbReference>
<dbReference type="PRINTS" id="PR01900">
    <property type="entry name" value="YIDCPROTEIN"/>
</dbReference>
<evidence type="ECO:0000255" key="1">
    <source>
        <dbReference type="HAMAP-Rule" id="MF_01810"/>
    </source>
</evidence>
<evidence type="ECO:0000256" key="2">
    <source>
        <dbReference type="SAM" id="MobiDB-lite"/>
    </source>
</evidence>
<name>YIDC_SHEPA</name>
<accession>A8HAI0</accession>
<keyword id="KW-0997">Cell inner membrane</keyword>
<keyword id="KW-1003">Cell membrane</keyword>
<keyword id="KW-0143">Chaperone</keyword>
<keyword id="KW-0472">Membrane</keyword>
<keyword id="KW-0653">Protein transport</keyword>
<keyword id="KW-1185">Reference proteome</keyword>
<keyword id="KW-0812">Transmembrane</keyword>
<keyword id="KW-1133">Transmembrane helix</keyword>
<keyword id="KW-0813">Transport</keyword>
<comment type="function">
    <text evidence="1">Required for the insertion and/or proper folding and/or complex formation of integral membrane proteins into the membrane. Involved in integration of membrane proteins that insert both dependently and independently of the Sec translocase complex, as well as at least some lipoproteins. Aids folding of multispanning membrane proteins.</text>
</comment>
<comment type="subunit">
    <text evidence="1">Interacts with the Sec translocase complex via SecD. Specifically interacts with transmembrane segments of nascent integral membrane proteins during membrane integration.</text>
</comment>
<comment type="subcellular location">
    <subcellularLocation>
        <location evidence="1">Cell inner membrane</location>
        <topology evidence="1">Multi-pass membrane protein</topology>
    </subcellularLocation>
</comment>
<comment type="similarity">
    <text evidence="1">Belongs to the OXA1/ALB3/YidC family. Type 1 subfamily.</text>
</comment>
<gene>
    <name evidence="1" type="primary">yidC</name>
    <name type="ordered locus">Spea_4257</name>
</gene>
<reference key="1">
    <citation type="submission" date="2007-10" db="EMBL/GenBank/DDBJ databases">
        <title>Complete sequence of Shewanella pealeana ATCC 700345.</title>
        <authorList>
            <consortium name="US DOE Joint Genome Institute"/>
            <person name="Copeland A."/>
            <person name="Lucas S."/>
            <person name="Lapidus A."/>
            <person name="Barry K."/>
            <person name="Glavina del Rio T."/>
            <person name="Dalin E."/>
            <person name="Tice H."/>
            <person name="Pitluck S."/>
            <person name="Chertkov O."/>
            <person name="Brettin T."/>
            <person name="Bruce D."/>
            <person name="Detter J.C."/>
            <person name="Han C."/>
            <person name="Schmutz J."/>
            <person name="Larimer F."/>
            <person name="Land M."/>
            <person name="Hauser L."/>
            <person name="Kyrpides N."/>
            <person name="Kim E."/>
            <person name="Zhao J.-S.Z."/>
            <person name="Manno D."/>
            <person name="Hawari J."/>
            <person name="Richardson P."/>
        </authorList>
    </citation>
    <scope>NUCLEOTIDE SEQUENCE [LARGE SCALE GENOMIC DNA]</scope>
    <source>
        <strain>ATCC 700345 / ANG-SQ1</strain>
    </source>
</reference>
<organism>
    <name type="scientific">Shewanella pealeana (strain ATCC 700345 / ANG-SQ1)</name>
    <dbReference type="NCBI Taxonomy" id="398579"/>
    <lineage>
        <taxon>Bacteria</taxon>
        <taxon>Pseudomonadati</taxon>
        <taxon>Pseudomonadota</taxon>
        <taxon>Gammaproteobacteria</taxon>
        <taxon>Alteromonadales</taxon>
        <taxon>Shewanellaceae</taxon>
        <taxon>Shewanella</taxon>
    </lineage>
</organism>